<dbReference type="EC" id="2.1.1.234" evidence="1"/>
<dbReference type="EMBL" id="AF079762">
    <property type="protein sequence ID" value="AAC68678.1"/>
    <property type="molecule type" value="Genomic_DNA"/>
</dbReference>
<dbReference type="RefSeq" id="WP_055641632.1">
    <property type="nucleotide sequence ID" value="NZ_CP059991.1"/>
</dbReference>
<dbReference type="PDB" id="3BXO">
    <property type="method" value="X-ray"/>
    <property type="resolution" value="2.00 A"/>
    <property type="chains" value="A/B=1-237"/>
</dbReference>
<dbReference type="PDBsum" id="3BXO"/>
<dbReference type="SMR" id="Q9ZGH6"/>
<dbReference type="KEGG" id="ag:AAC68678"/>
<dbReference type="BioCyc" id="MetaCyc:MONOMER-16954"/>
<dbReference type="BRENDA" id="2.1.1.234">
    <property type="organism ID" value="6106"/>
</dbReference>
<dbReference type="EvolutionaryTrace" id="Q9ZGH6"/>
<dbReference type="GO" id="GO:0042803">
    <property type="term" value="F:protein homodimerization activity"/>
    <property type="evidence" value="ECO:0000314"/>
    <property type="project" value="UniProtKB"/>
</dbReference>
<dbReference type="GO" id="GO:0008757">
    <property type="term" value="F:S-adenosylmethionine-dependent methyltransferase activity"/>
    <property type="evidence" value="ECO:0000314"/>
    <property type="project" value="UniProtKB"/>
</dbReference>
<dbReference type="GO" id="GO:0017000">
    <property type="term" value="P:antibiotic biosynthetic process"/>
    <property type="evidence" value="ECO:0000314"/>
    <property type="project" value="UniProtKB"/>
</dbReference>
<dbReference type="GO" id="GO:0032259">
    <property type="term" value="P:methylation"/>
    <property type="evidence" value="ECO:0000314"/>
    <property type="project" value="UniProtKB"/>
</dbReference>
<dbReference type="CDD" id="cd02440">
    <property type="entry name" value="AdoMet_MTases"/>
    <property type="match status" value="1"/>
</dbReference>
<dbReference type="FunFam" id="2.20.130.10:FF:000001">
    <property type="entry name" value="dTDP-3-amino-3,4,6-trideoxy-alpha-D-glucopyranose"/>
    <property type="match status" value="1"/>
</dbReference>
<dbReference type="FunFam" id="3.40.50.150:FF:000387">
    <property type="entry name" value="dTDP-3-amino-3,6-dideoxy-alpha-D-glucopyranose N,N-dimethyltransferase"/>
    <property type="match status" value="1"/>
</dbReference>
<dbReference type="Gene3D" id="2.20.130.10">
    <property type="entry name" value="CAC2371-like domains"/>
    <property type="match status" value="1"/>
</dbReference>
<dbReference type="Gene3D" id="3.40.50.150">
    <property type="entry name" value="Vaccinia Virus protein VP39"/>
    <property type="match status" value="1"/>
</dbReference>
<dbReference type="InterPro" id="IPR041698">
    <property type="entry name" value="Methyltransf_25"/>
</dbReference>
<dbReference type="InterPro" id="IPR029063">
    <property type="entry name" value="SAM-dependent_MTases_sf"/>
</dbReference>
<dbReference type="PANTHER" id="PTHR43861:SF1">
    <property type="entry name" value="TRANS-ACONITATE 2-METHYLTRANSFERASE"/>
    <property type="match status" value="1"/>
</dbReference>
<dbReference type="PANTHER" id="PTHR43861">
    <property type="entry name" value="TRANS-ACONITATE 2-METHYLTRANSFERASE-RELATED"/>
    <property type="match status" value="1"/>
</dbReference>
<dbReference type="Pfam" id="PF13649">
    <property type="entry name" value="Methyltransf_25"/>
    <property type="match status" value="1"/>
</dbReference>
<dbReference type="SUPFAM" id="SSF53335">
    <property type="entry name" value="S-adenosyl-L-methionine-dependent methyltransferases"/>
    <property type="match status" value="1"/>
</dbReference>
<reference key="1">
    <citation type="journal article" date="1998" name="Proc. Natl. Acad. Sci. U.S.A.">
        <title>A gene cluster for macrolide antibiotic biosynthesis in Streptomyces venezuelae: architecture of metabolic diversity.</title>
        <authorList>
            <person name="Xue Y."/>
            <person name="Zhao L."/>
            <person name="Liu H.W."/>
            <person name="Sherman D.H."/>
        </authorList>
    </citation>
    <scope>NUCLEOTIDE SEQUENCE [GENOMIC DNA]</scope>
    <scope>PATHWAY</scope>
    <source>
        <strain>ATCC 15439 / DSM 41110 / IMRU3627 / M-2140</strain>
    </source>
</reference>
<reference key="2">
    <citation type="journal article" date="2002" name="Biochemistry">
        <title>Expression, purification, and characterization of two N,N-dimethyltransferases, tylM1 and desVI, involved in the biosynthesis of mycaminose and desosamine.</title>
        <authorList>
            <person name="Chen H."/>
            <person name="Yamase H."/>
            <person name="Murakami K."/>
            <person name="Chang C.W."/>
            <person name="Zhao L."/>
            <person name="Zhao Z."/>
            <person name="Liu H.W."/>
        </authorList>
    </citation>
    <scope>FUNCTION</scope>
    <scope>CATALYTIC ACTIVITY</scope>
    <scope>SUBUNIT</scope>
    <scope>BIOPHYSICOCHEMICAL PROPERTIES</scope>
</reference>
<reference evidence="8" key="3">
    <citation type="journal article" date="2008" name="Biochemistry">
        <title>Three-dimensional structure of DesVI from Streptomyces venezuelae: a sugar N,N-dimethyltransferase required for dTDP-desosamine biosynthesis.</title>
        <authorList>
            <person name="Burgie E.S."/>
            <person name="Holden H.M."/>
        </authorList>
    </citation>
    <scope>X-RAY CRYSTALLOGRAPHY (2.00 ANGSTROMS) IN COMPLEX WITH S-ADENOSYL-L-METHIONINE AND UDP-BENZENE</scope>
    <scope>SUBUNIT</scope>
</reference>
<evidence type="ECO:0000269" key="1">
    <source>
    </source>
</evidence>
<evidence type="ECO:0000269" key="2">
    <source>
    </source>
</evidence>
<evidence type="ECO:0000269" key="3">
    <source>
    </source>
</evidence>
<evidence type="ECO:0000305" key="4"/>
<evidence type="ECO:0000305" key="5">
    <source>
    </source>
</evidence>
<evidence type="ECO:0000305" key="6">
    <source>
    </source>
</evidence>
<evidence type="ECO:0000312" key="7">
    <source>
        <dbReference type="EMBL" id="AAC68678.1"/>
    </source>
</evidence>
<evidence type="ECO:0007744" key="8">
    <source>
        <dbReference type="PDB" id="3BXO"/>
    </source>
</evidence>
<evidence type="ECO:0007829" key="9">
    <source>
        <dbReference type="PDB" id="3BXO"/>
    </source>
</evidence>
<accession>Q9ZGH6</accession>
<name>DESVI_STRVZ</name>
<comment type="function">
    <text evidence="1">S-adenosyl-L-methionine-dependent methyltransferase involved in the biosynthesis of desosamine, found in certain macrolide antibiotics such as erthyromycin, azithromycin, clarithromycin, and methymycin. Catalyzes the last step in the biosynthesis of dTDP-desosamine, i.e. the N,N-dimethylation of the 3-amino group of dTDP-3-amino-3,4,6-trideoxy-alpha-D-glucose.</text>
</comment>
<comment type="catalytic activity">
    <reaction evidence="1">
        <text>dTDP-3-amino-3,4,6-trideoxy-alpha-D-glucose + 2 S-adenosyl-L-methionine = dTDP-alpha-D-desosamine + 2 S-adenosyl-L-homocysteine + 2 H(+)</text>
        <dbReference type="Rhea" id="RHEA:31759"/>
        <dbReference type="ChEBI" id="CHEBI:15378"/>
        <dbReference type="ChEBI" id="CHEBI:57856"/>
        <dbReference type="ChEBI" id="CHEBI:59789"/>
        <dbReference type="ChEBI" id="CHEBI:63260"/>
        <dbReference type="ChEBI" id="CHEBI:63262"/>
        <dbReference type="EC" id="2.1.1.234"/>
    </reaction>
    <physiologicalReaction direction="left-to-right" evidence="5">
        <dbReference type="Rhea" id="RHEA:31760"/>
    </physiologicalReaction>
</comment>
<comment type="biophysicochemical properties">
    <kinetics>
        <KM evidence="1">307.4 uM for dTDP-3-amino-3,4,6-trideoxy-alpha-D-glucopyranose</KM>
        <KM evidence="1">276.6 uM for dTDP-3-amino-3,6-dideoxy-alpha-D-glucopyranose</KM>
        <text evidence="1">kcat is 92 min(-1) with dTDP-3-amino-3,4,6-trideoxy-alpha-D-glucopyranose as substrate. kcat is 4.2 min(-1) with dTDP-3-amino-3,6-dideoxy-alpha-D-glucopyranose as substrate.</text>
    </kinetics>
</comment>
<comment type="pathway">
    <text evidence="3">Antibiotic biosynthesis.</text>
</comment>
<comment type="subunit">
    <text evidence="1 2">Homodimer.</text>
</comment>
<comment type="similarity">
    <text evidence="4">Belongs to the methyltransferase TylM1/DesVI family.</text>
</comment>
<sequence>MYEVDHADVYDLFYLGRGKDYAAEASDIADLVRSRTPEASSLLDVACGTGTHLEHFTKEFGDTAGLELSEDMLTHARKRLPDATLHQGDMRDFRLGRKFSAVVSMFSSVGYLKTTEELGAAVASFAEHLEPGGVVVVEPWWFPETFADGWVSADVVRRDGRTVARVSHSVREGNATRMEVHFTVADPGKGVRHFSDVHLITLFHQAEYEAAFTAAGLRVEYLEGGPSGRGLFVGVPA</sequence>
<proteinExistence type="evidence at protein level"/>
<protein>
    <recommendedName>
        <fullName evidence="5">dTDP-3-amino-3,4,6-trideoxy-alpha-D-glucopyranose N,N-dimethyltransferase</fullName>
        <ecNumber evidence="1">2.1.1.234</ecNumber>
    </recommendedName>
</protein>
<keyword id="KW-0002">3D-structure</keyword>
<keyword id="KW-0045">Antibiotic biosynthesis</keyword>
<keyword id="KW-0489">Methyltransferase</keyword>
<keyword id="KW-0949">S-adenosyl-L-methionine</keyword>
<keyword id="KW-0808">Transferase</keyword>
<organism>
    <name type="scientific">Streptomyces venezuelae</name>
    <dbReference type="NCBI Taxonomy" id="54571"/>
    <lineage>
        <taxon>Bacteria</taxon>
        <taxon>Bacillati</taxon>
        <taxon>Actinomycetota</taxon>
        <taxon>Actinomycetes</taxon>
        <taxon>Kitasatosporales</taxon>
        <taxon>Streptomycetaceae</taxon>
        <taxon>Streptomyces</taxon>
    </lineage>
</organism>
<gene>
    <name evidence="7" type="primary">desVI</name>
</gene>
<feature type="chain" id="PRO_0000418452" description="dTDP-3-amino-3,4,6-trideoxy-alpha-D-glucopyranose N,N-dimethyltransferase">
    <location>
        <begin position="1"/>
        <end position="237"/>
    </location>
</feature>
<feature type="binding site" evidence="6">
    <location>
        <position position="14"/>
    </location>
    <ligand>
        <name>substrate</name>
    </ligand>
</feature>
<feature type="binding site" evidence="6">
    <location>
        <position position="17"/>
    </location>
    <ligand>
        <name>substrate</name>
    </ligand>
</feature>
<feature type="binding site" evidence="2 8">
    <location>
        <position position="21"/>
    </location>
    <ligand>
        <name>S-adenosyl-L-methionine</name>
        <dbReference type="ChEBI" id="CHEBI:59789"/>
    </ligand>
</feature>
<feature type="binding site" evidence="2 8">
    <location>
        <position position="46"/>
    </location>
    <ligand>
        <name>S-adenosyl-L-methionine</name>
        <dbReference type="ChEBI" id="CHEBI:59789"/>
    </ligand>
</feature>
<feature type="binding site" evidence="2 8">
    <location>
        <position position="67"/>
    </location>
    <ligand>
        <name>S-adenosyl-L-methionine</name>
        <dbReference type="ChEBI" id="CHEBI:59789"/>
    </ligand>
</feature>
<feature type="binding site" evidence="2 8">
    <location>
        <begin position="89"/>
        <end position="90"/>
    </location>
    <ligand>
        <name>S-adenosyl-L-methionine</name>
        <dbReference type="ChEBI" id="CHEBI:59789"/>
    </ligand>
</feature>
<feature type="binding site" evidence="2 8">
    <location>
        <position position="105"/>
    </location>
    <ligand>
        <name>S-adenosyl-L-methionine</name>
        <dbReference type="ChEBI" id="CHEBI:59789"/>
    </ligand>
</feature>
<feature type="binding site" evidence="6">
    <location>
        <begin position="145"/>
        <end position="147"/>
    </location>
    <ligand>
        <name>substrate</name>
    </ligand>
</feature>
<feature type="binding site" evidence="6">
    <location>
        <position position="152"/>
    </location>
    <ligand>
        <name>substrate</name>
    </ligand>
</feature>
<feature type="binding site" evidence="6">
    <location>
        <begin position="165"/>
        <end position="169"/>
    </location>
    <ligand>
        <name>substrate</name>
    </ligand>
</feature>
<feature type="binding site" evidence="6">
    <location>
        <position position="229"/>
    </location>
    <ligand>
        <name>substrate</name>
    </ligand>
</feature>
<feature type="helix" evidence="9">
    <location>
        <begin position="6"/>
        <end position="17"/>
    </location>
</feature>
<feature type="helix" evidence="9">
    <location>
        <begin position="21"/>
        <end position="35"/>
    </location>
</feature>
<feature type="strand" evidence="9">
    <location>
        <begin position="41"/>
        <end position="45"/>
    </location>
</feature>
<feature type="helix" evidence="9">
    <location>
        <begin position="51"/>
        <end position="60"/>
    </location>
</feature>
<feature type="strand" evidence="9">
    <location>
        <begin position="61"/>
        <end position="68"/>
    </location>
</feature>
<feature type="helix" evidence="9">
    <location>
        <begin position="70"/>
        <end position="79"/>
    </location>
</feature>
<feature type="strand" evidence="9">
    <location>
        <begin position="84"/>
        <end position="87"/>
    </location>
</feature>
<feature type="turn" evidence="9">
    <location>
        <begin position="90"/>
        <end position="92"/>
    </location>
</feature>
<feature type="strand" evidence="9">
    <location>
        <begin position="99"/>
        <end position="104"/>
    </location>
</feature>
<feature type="helix" evidence="9">
    <location>
        <begin position="108"/>
        <end position="111"/>
    </location>
</feature>
<feature type="helix" evidence="9">
    <location>
        <begin position="115"/>
        <end position="127"/>
    </location>
</feature>
<feature type="strand" evidence="9">
    <location>
        <begin position="129"/>
        <end position="137"/>
    </location>
</feature>
<feature type="turn" evidence="9">
    <location>
        <begin position="143"/>
        <end position="145"/>
    </location>
</feature>
<feature type="strand" evidence="9">
    <location>
        <begin position="151"/>
        <end position="158"/>
    </location>
</feature>
<feature type="strand" evidence="9">
    <location>
        <begin position="161"/>
        <end position="172"/>
    </location>
</feature>
<feature type="strand" evidence="9">
    <location>
        <begin position="175"/>
        <end position="186"/>
    </location>
</feature>
<feature type="turn" evidence="9">
    <location>
        <begin position="187"/>
        <end position="189"/>
    </location>
</feature>
<feature type="strand" evidence="9">
    <location>
        <begin position="190"/>
        <end position="201"/>
    </location>
</feature>
<feature type="helix" evidence="9">
    <location>
        <begin position="205"/>
        <end position="214"/>
    </location>
</feature>
<feature type="strand" evidence="9">
    <location>
        <begin position="217"/>
        <end position="224"/>
    </location>
</feature>
<feature type="turn" evidence="9">
    <location>
        <begin position="225"/>
        <end position="227"/>
    </location>
</feature>
<feature type="strand" evidence="9">
    <location>
        <begin position="231"/>
        <end position="236"/>
    </location>
</feature>